<name>RIMO_METPP</name>
<sequence length="471" mass="51139">MTQTADAASTALTSGDAASRNIPKIGFVSLGCPKALTDSELILTQLRAEGYDTSKSFAGADLVIVNTCGFIDDAVKESLDTIGEALAENGRVIVTGCLGAKAGEGGGNLVRQMHPSVLAVTGPHATQEVMDAVHVHVPKPHDPFVDLVPAYGVKLTPRHYAYLKISEGCNHRCSFCIIPSMRGDLVSRPIGDVLNEARALFESGVKELLVISQDTSAYGVDVKYRTGFWDGKPVKTRMTDLVERLGELAEPFGAWVRLHYVYPYPHVDEILPMMAGGRVLPYLDVPFQHAHPDVLKRMKRPANGEKNLERLQRWREACPQIVVRSTFIAGFPGETEAEFEHLLDFMREARIDRAGCFAYSPVEGASANALAGALPEAVREERRARFMAVAEAVSAEKLRERVGAEMQVLIDAAPALGKKGGRGRSYADAPEIDGVVHLLPPQKASKQLRVGEFTRARIVGTQGHDLVGQPL</sequence>
<proteinExistence type="inferred from homology"/>
<accession>A2SG87</accession>
<protein>
    <recommendedName>
        <fullName evidence="1">Ribosomal protein uS12 methylthiotransferase RimO</fullName>
        <shortName evidence="1">uS12 MTTase</shortName>
        <shortName evidence="1">uS12 methylthiotransferase</shortName>
        <ecNumber evidence="1">2.8.4.4</ecNumber>
    </recommendedName>
    <alternativeName>
        <fullName evidence="1">Ribosomal protein uS12 (aspartate-C(3))-methylthiotransferase</fullName>
    </alternativeName>
    <alternativeName>
        <fullName evidence="1">Ribosome maturation factor RimO</fullName>
    </alternativeName>
</protein>
<dbReference type="EC" id="2.8.4.4" evidence="1"/>
<dbReference type="EMBL" id="CP000555">
    <property type="protein sequence ID" value="ABM94576.1"/>
    <property type="molecule type" value="Genomic_DNA"/>
</dbReference>
<dbReference type="RefSeq" id="WP_011829213.1">
    <property type="nucleotide sequence ID" value="NC_008825.1"/>
</dbReference>
<dbReference type="SMR" id="A2SG87"/>
<dbReference type="STRING" id="420662.Mpe_A1614"/>
<dbReference type="KEGG" id="mpt:Mpe_A1614"/>
<dbReference type="eggNOG" id="COG0621">
    <property type="taxonomic scope" value="Bacteria"/>
</dbReference>
<dbReference type="HOGENOM" id="CLU_018697_0_0_4"/>
<dbReference type="Proteomes" id="UP000000366">
    <property type="component" value="Chromosome"/>
</dbReference>
<dbReference type="GO" id="GO:0005829">
    <property type="term" value="C:cytosol"/>
    <property type="evidence" value="ECO:0007669"/>
    <property type="project" value="TreeGrafter"/>
</dbReference>
<dbReference type="GO" id="GO:0051539">
    <property type="term" value="F:4 iron, 4 sulfur cluster binding"/>
    <property type="evidence" value="ECO:0007669"/>
    <property type="project" value="UniProtKB-UniRule"/>
</dbReference>
<dbReference type="GO" id="GO:0035599">
    <property type="term" value="F:aspartic acid methylthiotransferase activity"/>
    <property type="evidence" value="ECO:0007669"/>
    <property type="project" value="TreeGrafter"/>
</dbReference>
<dbReference type="GO" id="GO:0046872">
    <property type="term" value="F:metal ion binding"/>
    <property type="evidence" value="ECO:0007669"/>
    <property type="project" value="UniProtKB-KW"/>
</dbReference>
<dbReference type="GO" id="GO:0103039">
    <property type="term" value="F:protein methylthiotransferase activity"/>
    <property type="evidence" value="ECO:0007669"/>
    <property type="project" value="UniProtKB-EC"/>
</dbReference>
<dbReference type="GO" id="GO:0006400">
    <property type="term" value="P:tRNA modification"/>
    <property type="evidence" value="ECO:0007669"/>
    <property type="project" value="InterPro"/>
</dbReference>
<dbReference type="CDD" id="cd01335">
    <property type="entry name" value="Radical_SAM"/>
    <property type="match status" value="1"/>
</dbReference>
<dbReference type="FunFam" id="3.40.50.12160:FF:000002">
    <property type="entry name" value="Ribosomal protein S12 methylthiotransferase RimO"/>
    <property type="match status" value="1"/>
</dbReference>
<dbReference type="FunFam" id="3.80.30.20:FF:000001">
    <property type="entry name" value="tRNA-2-methylthio-N(6)-dimethylallyladenosine synthase 2"/>
    <property type="match status" value="1"/>
</dbReference>
<dbReference type="Gene3D" id="3.40.50.12160">
    <property type="entry name" value="Methylthiotransferase, N-terminal domain"/>
    <property type="match status" value="1"/>
</dbReference>
<dbReference type="Gene3D" id="2.40.50.140">
    <property type="entry name" value="Nucleic acid-binding proteins"/>
    <property type="match status" value="1"/>
</dbReference>
<dbReference type="Gene3D" id="3.80.30.20">
    <property type="entry name" value="tm_1862 like domain"/>
    <property type="match status" value="1"/>
</dbReference>
<dbReference type="HAMAP" id="MF_01865">
    <property type="entry name" value="MTTase_RimO"/>
    <property type="match status" value="1"/>
</dbReference>
<dbReference type="InterPro" id="IPR006638">
    <property type="entry name" value="Elp3/MiaA/NifB-like_rSAM"/>
</dbReference>
<dbReference type="InterPro" id="IPR005839">
    <property type="entry name" value="Methylthiotransferase"/>
</dbReference>
<dbReference type="InterPro" id="IPR020612">
    <property type="entry name" value="Methylthiotransferase_CS"/>
</dbReference>
<dbReference type="InterPro" id="IPR013848">
    <property type="entry name" value="Methylthiotransferase_N"/>
</dbReference>
<dbReference type="InterPro" id="IPR038135">
    <property type="entry name" value="Methylthiotransferase_N_sf"/>
</dbReference>
<dbReference type="InterPro" id="IPR012340">
    <property type="entry name" value="NA-bd_OB-fold"/>
</dbReference>
<dbReference type="InterPro" id="IPR005840">
    <property type="entry name" value="Ribosomal_uS12_MeSTrfase_RimO"/>
</dbReference>
<dbReference type="InterPro" id="IPR007197">
    <property type="entry name" value="rSAM"/>
</dbReference>
<dbReference type="InterPro" id="IPR023404">
    <property type="entry name" value="rSAM_horseshoe"/>
</dbReference>
<dbReference type="InterPro" id="IPR002792">
    <property type="entry name" value="TRAM_dom"/>
</dbReference>
<dbReference type="NCBIfam" id="TIGR01125">
    <property type="entry name" value="30S ribosomal protein S12 methylthiotransferase RimO"/>
    <property type="match status" value="1"/>
</dbReference>
<dbReference type="NCBIfam" id="TIGR00089">
    <property type="entry name" value="MiaB/RimO family radical SAM methylthiotransferase"/>
    <property type="match status" value="1"/>
</dbReference>
<dbReference type="PANTHER" id="PTHR43837">
    <property type="entry name" value="RIBOSOMAL PROTEIN S12 METHYLTHIOTRANSFERASE RIMO"/>
    <property type="match status" value="1"/>
</dbReference>
<dbReference type="PANTHER" id="PTHR43837:SF1">
    <property type="entry name" value="RIBOSOMAL PROTEIN US12 METHYLTHIOTRANSFERASE RIMO"/>
    <property type="match status" value="1"/>
</dbReference>
<dbReference type="Pfam" id="PF04055">
    <property type="entry name" value="Radical_SAM"/>
    <property type="match status" value="1"/>
</dbReference>
<dbReference type="Pfam" id="PF18693">
    <property type="entry name" value="TRAM_2"/>
    <property type="match status" value="1"/>
</dbReference>
<dbReference type="Pfam" id="PF00919">
    <property type="entry name" value="UPF0004"/>
    <property type="match status" value="1"/>
</dbReference>
<dbReference type="SFLD" id="SFLDG01082">
    <property type="entry name" value="B12-binding_domain_containing"/>
    <property type="match status" value="1"/>
</dbReference>
<dbReference type="SFLD" id="SFLDS00029">
    <property type="entry name" value="Radical_SAM"/>
    <property type="match status" value="1"/>
</dbReference>
<dbReference type="SFLD" id="SFLDF00274">
    <property type="entry name" value="ribosomal_protein_S12_methylth"/>
    <property type="match status" value="1"/>
</dbReference>
<dbReference type="SMART" id="SM00729">
    <property type="entry name" value="Elp3"/>
    <property type="match status" value="1"/>
</dbReference>
<dbReference type="SUPFAM" id="SSF102114">
    <property type="entry name" value="Radical SAM enzymes"/>
    <property type="match status" value="1"/>
</dbReference>
<dbReference type="PROSITE" id="PS51449">
    <property type="entry name" value="MTTASE_N"/>
    <property type="match status" value="1"/>
</dbReference>
<dbReference type="PROSITE" id="PS01278">
    <property type="entry name" value="MTTASE_RADICAL"/>
    <property type="match status" value="1"/>
</dbReference>
<dbReference type="PROSITE" id="PS51918">
    <property type="entry name" value="RADICAL_SAM"/>
    <property type="match status" value="1"/>
</dbReference>
<dbReference type="PROSITE" id="PS50926">
    <property type="entry name" value="TRAM"/>
    <property type="match status" value="1"/>
</dbReference>
<gene>
    <name evidence="1" type="primary">rimO</name>
    <name type="ordered locus">Mpe_A1614</name>
</gene>
<keyword id="KW-0004">4Fe-4S</keyword>
<keyword id="KW-0963">Cytoplasm</keyword>
<keyword id="KW-0408">Iron</keyword>
<keyword id="KW-0411">Iron-sulfur</keyword>
<keyword id="KW-0479">Metal-binding</keyword>
<keyword id="KW-1185">Reference proteome</keyword>
<keyword id="KW-0949">S-adenosyl-L-methionine</keyword>
<keyword id="KW-0808">Transferase</keyword>
<comment type="function">
    <text evidence="1">Catalyzes the methylthiolation of an aspartic acid residue of ribosomal protein uS12.</text>
</comment>
<comment type="catalytic activity">
    <reaction evidence="1">
        <text>L-aspartate(89)-[ribosomal protein uS12]-hydrogen + (sulfur carrier)-SH + AH2 + 2 S-adenosyl-L-methionine = 3-methylsulfanyl-L-aspartate(89)-[ribosomal protein uS12]-hydrogen + (sulfur carrier)-H + 5'-deoxyadenosine + L-methionine + A + S-adenosyl-L-homocysteine + 2 H(+)</text>
        <dbReference type="Rhea" id="RHEA:37087"/>
        <dbReference type="Rhea" id="RHEA-COMP:10460"/>
        <dbReference type="Rhea" id="RHEA-COMP:10461"/>
        <dbReference type="Rhea" id="RHEA-COMP:14737"/>
        <dbReference type="Rhea" id="RHEA-COMP:14739"/>
        <dbReference type="ChEBI" id="CHEBI:13193"/>
        <dbReference type="ChEBI" id="CHEBI:15378"/>
        <dbReference type="ChEBI" id="CHEBI:17319"/>
        <dbReference type="ChEBI" id="CHEBI:17499"/>
        <dbReference type="ChEBI" id="CHEBI:29917"/>
        <dbReference type="ChEBI" id="CHEBI:29961"/>
        <dbReference type="ChEBI" id="CHEBI:57844"/>
        <dbReference type="ChEBI" id="CHEBI:57856"/>
        <dbReference type="ChEBI" id="CHEBI:59789"/>
        <dbReference type="ChEBI" id="CHEBI:64428"/>
        <dbReference type="ChEBI" id="CHEBI:73599"/>
        <dbReference type="EC" id="2.8.4.4"/>
    </reaction>
</comment>
<comment type="cofactor">
    <cofactor evidence="1">
        <name>[4Fe-4S] cluster</name>
        <dbReference type="ChEBI" id="CHEBI:49883"/>
    </cofactor>
    <text evidence="1">Binds 2 [4Fe-4S] clusters. One cluster is coordinated with 3 cysteines and an exchangeable S-adenosyl-L-methionine.</text>
</comment>
<comment type="subcellular location">
    <subcellularLocation>
        <location evidence="1">Cytoplasm</location>
    </subcellularLocation>
</comment>
<comment type="similarity">
    <text evidence="1">Belongs to the methylthiotransferase family. RimO subfamily.</text>
</comment>
<evidence type="ECO:0000255" key="1">
    <source>
        <dbReference type="HAMAP-Rule" id="MF_01865"/>
    </source>
</evidence>
<evidence type="ECO:0000255" key="2">
    <source>
        <dbReference type="PROSITE-ProRule" id="PRU01266"/>
    </source>
</evidence>
<reference key="1">
    <citation type="journal article" date="2007" name="J. Bacteriol.">
        <title>Whole-genome analysis of the methyl tert-butyl ether-degrading beta-proteobacterium Methylibium petroleiphilum PM1.</title>
        <authorList>
            <person name="Kane S.R."/>
            <person name="Chakicherla A.Y."/>
            <person name="Chain P.S.G."/>
            <person name="Schmidt R."/>
            <person name="Shin M.W."/>
            <person name="Legler T.C."/>
            <person name="Scow K.M."/>
            <person name="Larimer F.W."/>
            <person name="Lucas S.M."/>
            <person name="Richardson P.M."/>
            <person name="Hristova K.R."/>
        </authorList>
    </citation>
    <scope>NUCLEOTIDE SEQUENCE [LARGE SCALE GENOMIC DNA]</scope>
    <source>
        <strain>ATCC BAA-1232 / LMG 22953 / PM1</strain>
    </source>
</reference>
<organism>
    <name type="scientific">Methylibium petroleiphilum (strain ATCC BAA-1232 / LMG 22953 / PM1)</name>
    <dbReference type="NCBI Taxonomy" id="420662"/>
    <lineage>
        <taxon>Bacteria</taxon>
        <taxon>Pseudomonadati</taxon>
        <taxon>Pseudomonadota</taxon>
        <taxon>Betaproteobacteria</taxon>
        <taxon>Burkholderiales</taxon>
        <taxon>Sphaerotilaceae</taxon>
        <taxon>Methylibium</taxon>
    </lineage>
</organism>
<feature type="chain" id="PRO_0000374889" description="Ribosomal protein uS12 methylthiotransferase RimO">
    <location>
        <begin position="1"/>
        <end position="471"/>
    </location>
</feature>
<feature type="domain" description="MTTase N-terminal" evidence="1">
    <location>
        <begin position="23"/>
        <end position="138"/>
    </location>
</feature>
<feature type="domain" description="Radical SAM core" evidence="2">
    <location>
        <begin position="155"/>
        <end position="396"/>
    </location>
</feature>
<feature type="domain" description="TRAM" evidence="1">
    <location>
        <begin position="399"/>
        <end position="471"/>
    </location>
</feature>
<feature type="binding site" evidence="1">
    <location>
        <position position="32"/>
    </location>
    <ligand>
        <name>[4Fe-4S] cluster</name>
        <dbReference type="ChEBI" id="CHEBI:49883"/>
        <label>1</label>
    </ligand>
</feature>
<feature type="binding site" evidence="1">
    <location>
        <position position="68"/>
    </location>
    <ligand>
        <name>[4Fe-4S] cluster</name>
        <dbReference type="ChEBI" id="CHEBI:49883"/>
        <label>1</label>
    </ligand>
</feature>
<feature type="binding site" evidence="1">
    <location>
        <position position="97"/>
    </location>
    <ligand>
        <name>[4Fe-4S] cluster</name>
        <dbReference type="ChEBI" id="CHEBI:49883"/>
        <label>1</label>
    </ligand>
</feature>
<feature type="binding site" evidence="1">
    <location>
        <position position="169"/>
    </location>
    <ligand>
        <name>[4Fe-4S] cluster</name>
        <dbReference type="ChEBI" id="CHEBI:49883"/>
        <label>2</label>
        <note>4Fe-4S-S-AdoMet</note>
    </ligand>
</feature>
<feature type="binding site" evidence="1">
    <location>
        <position position="173"/>
    </location>
    <ligand>
        <name>[4Fe-4S] cluster</name>
        <dbReference type="ChEBI" id="CHEBI:49883"/>
        <label>2</label>
        <note>4Fe-4S-S-AdoMet</note>
    </ligand>
</feature>
<feature type="binding site" evidence="1">
    <location>
        <position position="176"/>
    </location>
    <ligand>
        <name>[4Fe-4S] cluster</name>
        <dbReference type="ChEBI" id="CHEBI:49883"/>
        <label>2</label>
        <note>4Fe-4S-S-AdoMet</note>
    </ligand>
</feature>